<name>RS4_PELTS</name>
<proteinExistence type="inferred from homology"/>
<organism>
    <name type="scientific">Pelotomaculum thermopropionicum (strain DSM 13744 / JCM 10971 / SI)</name>
    <dbReference type="NCBI Taxonomy" id="370438"/>
    <lineage>
        <taxon>Bacteria</taxon>
        <taxon>Bacillati</taxon>
        <taxon>Bacillota</taxon>
        <taxon>Clostridia</taxon>
        <taxon>Eubacteriales</taxon>
        <taxon>Desulfotomaculaceae</taxon>
        <taxon>Pelotomaculum</taxon>
    </lineage>
</organism>
<sequence>MARYTGSVCRLCRREGLKLYLKGDRCYTPKCAIDRRSYAPGQHGQGRKKVSEYGLQLREKQKARRIYGILESQFRRYFEKAERQPGITGENLLRLLERRLDNVIYRLGLGASRNEARQLVRHGHFTVNGRRVNIPSYLVKPGDVIAVRDQSKESPRIKELLERAADRTPPAWLEYEADQARARVAALPARDQIDAPVQEHLIVELYSR</sequence>
<evidence type="ECO:0000255" key="1">
    <source>
        <dbReference type="HAMAP-Rule" id="MF_01306"/>
    </source>
</evidence>
<evidence type="ECO:0000305" key="2"/>
<protein>
    <recommendedName>
        <fullName evidence="1">Small ribosomal subunit protein uS4</fullName>
    </recommendedName>
    <alternativeName>
        <fullName evidence="2">30S ribosomal protein S4</fullName>
    </alternativeName>
</protein>
<gene>
    <name evidence="1" type="primary">rpsD</name>
    <name type="ordered locus">PTH_0347</name>
</gene>
<comment type="function">
    <text evidence="1">One of the primary rRNA binding proteins, it binds directly to 16S rRNA where it nucleates assembly of the body of the 30S subunit.</text>
</comment>
<comment type="function">
    <text evidence="1">With S5 and S12 plays an important role in translational accuracy.</text>
</comment>
<comment type="subunit">
    <text evidence="1">Part of the 30S ribosomal subunit. Contacts protein S5. The interaction surface between S4 and S5 is involved in control of translational fidelity.</text>
</comment>
<comment type="similarity">
    <text evidence="1">Belongs to the universal ribosomal protein uS4 family.</text>
</comment>
<dbReference type="EMBL" id="AP009389">
    <property type="protein sequence ID" value="BAF58529.1"/>
    <property type="molecule type" value="Genomic_DNA"/>
</dbReference>
<dbReference type="SMR" id="A5D5E8"/>
<dbReference type="STRING" id="370438.PTH_0347"/>
<dbReference type="KEGG" id="pth:PTH_0347"/>
<dbReference type="eggNOG" id="COG0522">
    <property type="taxonomic scope" value="Bacteria"/>
</dbReference>
<dbReference type="HOGENOM" id="CLU_092403_0_2_9"/>
<dbReference type="Proteomes" id="UP000006556">
    <property type="component" value="Chromosome"/>
</dbReference>
<dbReference type="GO" id="GO:0015935">
    <property type="term" value="C:small ribosomal subunit"/>
    <property type="evidence" value="ECO:0007669"/>
    <property type="project" value="InterPro"/>
</dbReference>
<dbReference type="GO" id="GO:0019843">
    <property type="term" value="F:rRNA binding"/>
    <property type="evidence" value="ECO:0007669"/>
    <property type="project" value="UniProtKB-UniRule"/>
</dbReference>
<dbReference type="GO" id="GO:0003735">
    <property type="term" value="F:structural constituent of ribosome"/>
    <property type="evidence" value="ECO:0007669"/>
    <property type="project" value="InterPro"/>
</dbReference>
<dbReference type="GO" id="GO:0042274">
    <property type="term" value="P:ribosomal small subunit biogenesis"/>
    <property type="evidence" value="ECO:0007669"/>
    <property type="project" value="TreeGrafter"/>
</dbReference>
<dbReference type="GO" id="GO:0006412">
    <property type="term" value="P:translation"/>
    <property type="evidence" value="ECO:0007669"/>
    <property type="project" value="UniProtKB-UniRule"/>
</dbReference>
<dbReference type="CDD" id="cd00165">
    <property type="entry name" value="S4"/>
    <property type="match status" value="1"/>
</dbReference>
<dbReference type="FunFam" id="1.10.1050.10:FF:000001">
    <property type="entry name" value="30S ribosomal protein S4"/>
    <property type="match status" value="1"/>
</dbReference>
<dbReference type="FunFam" id="3.10.290.10:FF:000001">
    <property type="entry name" value="30S ribosomal protein S4"/>
    <property type="match status" value="1"/>
</dbReference>
<dbReference type="Gene3D" id="1.10.1050.10">
    <property type="entry name" value="Ribosomal Protein S4 Delta 41, Chain A, domain 1"/>
    <property type="match status" value="1"/>
</dbReference>
<dbReference type="Gene3D" id="3.10.290.10">
    <property type="entry name" value="RNA-binding S4 domain"/>
    <property type="match status" value="1"/>
</dbReference>
<dbReference type="HAMAP" id="MF_01306_B">
    <property type="entry name" value="Ribosomal_uS4_B"/>
    <property type="match status" value="1"/>
</dbReference>
<dbReference type="InterPro" id="IPR022801">
    <property type="entry name" value="Ribosomal_uS4"/>
</dbReference>
<dbReference type="InterPro" id="IPR005709">
    <property type="entry name" value="Ribosomal_uS4_bac-type"/>
</dbReference>
<dbReference type="InterPro" id="IPR018079">
    <property type="entry name" value="Ribosomal_uS4_CS"/>
</dbReference>
<dbReference type="InterPro" id="IPR001912">
    <property type="entry name" value="Ribosomal_uS4_N"/>
</dbReference>
<dbReference type="InterPro" id="IPR002942">
    <property type="entry name" value="S4_RNA-bd"/>
</dbReference>
<dbReference type="InterPro" id="IPR036986">
    <property type="entry name" value="S4_RNA-bd_sf"/>
</dbReference>
<dbReference type="NCBIfam" id="NF003717">
    <property type="entry name" value="PRK05327.1"/>
    <property type="match status" value="1"/>
</dbReference>
<dbReference type="NCBIfam" id="TIGR01017">
    <property type="entry name" value="rpsD_bact"/>
    <property type="match status" value="1"/>
</dbReference>
<dbReference type="PANTHER" id="PTHR11831">
    <property type="entry name" value="30S 40S RIBOSOMAL PROTEIN"/>
    <property type="match status" value="1"/>
</dbReference>
<dbReference type="PANTHER" id="PTHR11831:SF4">
    <property type="entry name" value="SMALL RIBOSOMAL SUBUNIT PROTEIN US4M"/>
    <property type="match status" value="1"/>
</dbReference>
<dbReference type="Pfam" id="PF00163">
    <property type="entry name" value="Ribosomal_S4"/>
    <property type="match status" value="1"/>
</dbReference>
<dbReference type="Pfam" id="PF01479">
    <property type="entry name" value="S4"/>
    <property type="match status" value="1"/>
</dbReference>
<dbReference type="SMART" id="SM01390">
    <property type="entry name" value="Ribosomal_S4"/>
    <property type="match status" value="1"/>
</dbReference>
<dbReference type="SMART" id="SM00363">
    <property type="entry name" value="S4"/>
    <property type="match status" value="1"/>
</dbReference>
<dbReference type="SUPFAM" id="SSF55174">
    <property type="entry name" value="Alpha-L RNA-binding motif"/>
    <property type="match status" value="1"/>
</dbReference>
<dbReference type="PROSITE" id="PS00632">
    <property type="entry name" value="RIBOSOMAL_S4"/>
    <property type="match status" value="1"/>
</dbReference>
<dbReference type="PROSITE" id="PS50889">
    <property type="entry name" value="S4"/>
    <property type="match status" value="1"/>
</dbReference>
<reference key="1">
    <citation type="journal article" date="2008" name="Genome Res.">
        <title>The genome of Pelotomaculum thermopropionicum reveals niche-associated evolution in anaerobic microbiota.</title>
        <authorList>
            <person name="Kosaka T."/>
            <person name="Kato S."/>
            <person name="Shimoyama T."/>
            <person name="Ishii S."/>
            <person name="Abe T."/>
            <person name="Watanabe K."/>
        </authorList>
    </citation>
    <scope>NUCLEOTIDE SEQUENCE [LARGE SCALE GENOMIC DNA]</scope>
    <source>
        <strain>DSM 13744 / JCM 10971 / SI</strain>
    </source>
</reference>
<feature type="chain" id="PRO_1000085982" description="Small ribosomal subunit protein uS4">
    <location>
        <begin position="1"/>
        <end position="208"/>
    </location>
</feature>
<feature type="domain" description="S4 RNA-binding" evidence="1">
    <location>
        <begin position="98"/>
        <end position="161"/>
    </location>
</feature>
<accession>A5D5E8</accession>
<keyword id="KW-1185">Reference proteome</keyword>
<keyword id="KW-0687">Ribonucleoprotein</keyword>
<keyword id="KW-0689">Ribosomal protein</keyword>
<keyword id="KW-0694">RNA-binding</keyword>
<keyword id="KW-0699">rRNA-binding</keyword>